<reference key="1">
    <citation type="submission" date="2004-09" db="EMBL/GenBank/DDBJ databases">
        <authorList>
            <consortium name="NIH - Xenopus Gene Collection (XGC) project"/>
        </authorList>
    </citation>
    <scope>NUCLEOTIDE SEQUENCE [LARGE SCALE MRNA]</scope>
    <source>
        <tissue>Embryo</tissue>
    </source>
</reference>
<comment type="function">
    <text evidence="1">Binds specifically to GTP-Rho.</text>
</comment>
<comment type="subunit">
    <text evidence="1">Interacts with RhoA.</text>
</comment>
<comment type="subcellular location">
    <subcellularLocation>
        <location evidence="1">Cytoplasm</location>
        <location evidence="1">Perinuclear region</location>
    </subcellularLocation>
</comment>
<comment type="similarity">
    <text evidence="5">Belongs to the RHPN family.</text>
</comment>
<name>RHN2B_XENLA</name>
<feature type="chain" id="PRO_0000340664" description="Rhophilin-2-B">
    <location>
        <begin position="1"/>
        <end position="683"/>
    </location>
</feature>
<feature type="domain" description="REM-1" evidence="4">
    <location>
        <begin position="25"/>
        <end position="99"/>
    </location>
</feature>
<feature type="domain" description="BRO1" evidence="3">
    <location>
        <begin position="110"/>
        <end position="501"/>
    </location>
</feature>
<feature type="domain" description="PDZ" evidence="2">
    <location>
        <begin position="515"/>
        <end position="592"/>
    </location>
</feature>
<accession>Q63ZR5</accession>
<proteinExistence type="evidence at transcript level"/>
<organism>
    <name type="scientific">Xenopus laevis</name>
    <name type="common">African clawed frog</name>
    <dbReference type="NCBI Taxonomy" id="8355"/>
    <lineage>
        <taxon>Eukaryota</taxon>
        <taxon>Metazoa</taxon>
        <taxon>Chordata</taxon>
        <taxon>Craniata</taxon>
        <taxon>Vertebrata</taxon>
        <taxon>Euteleostomi</taxon>
        <taxon>Amphibia</taxon>
        <taxon>Batrachia</taxon>
        <taxon>Anura</taxon>
        <taxon>Pipoidea</taxon>
        <taxon>Pipidae</taxon>
        <taxon>Xenopodinae</taxon>
        <taxon>Xenopus</taxon>
        <taxon>Xenopus</taxon>
    </lineage>
</organism>
<sequence length="683" mass="77044">MTDALLPANLNAKRLSEQNYFRKGKSIAQTGRSKLQNQRAILNQQILKAMRMRAGAENLLRATANNKIREQVLLELSFVNSNLQRLKEELERLNISVEVYQHTEQASNIPLIPLGLKETKDVDFTTAFKDFILEHYSEDASEYENELADLMDLRQACRTPSRDEAGVELLVSYFQQLGYLENRFFPPSRNIGILFTWYDSFTGVPVSQPNISLEKASILFNIAALYSQIGTRCNRQTKIGLEEAVTTFQKAAGVLNYLKETFTHTPSYDMSPAMLGALIKMLLAEAHECYFEKMILSGIQNEFCTLLKAAQEAAKVSEVHMQVYTLMNQAPIKENVPYSWSVMVQVKAEHYKALANYFVAITLIDYQLNLSDDEDKQEKAISQLYDSMPEGLTAQTILKDQQQRTLLGKAHLSKAIRSHEEAIRFSTLCSTLRQIDVLQLILSAFHQRSLLKFSQHQKPDDFLDLLSAPDIVSKTEYQAETIPPQLSKDKVTDIFQRLGPLSIFSVKQRWSAPRKMCITKEDGDFGFVLKGDCPVQVISLDPLCPAATEGLKEGDYIVSVAGKDCKWCSTSQVMDMLQETGQDSIEIQVISIQDQTNSLANKSATYYAGMQKTYSLVCLTMDNDKNTKTQKATKKLSFLSWGFKNRQKAASTICLPSEVKGKPKTDMVFSFPDNSLSTESALY</sequence>
<gene>
    <name type="primary">rhpn2-b</name>
</gene>
<keyword id="KW-0175">Coiled coil</keyword>
<keyword id="KW-0963">Cytoplasm</keyword>
<keyword id="KW-1185">Reference proteome</keyword>
<evidence type="ECO:0000250" key="1"/>
<evidence type="ECO:0000255" key="2">
    <source>
        <dbReference type="PROSITE-ProRule" id="PRU00143"/>
    </source>
</evidence>
<evidence type="ECO:0000255" key="3">
    <source>
        <dbReference type="PROSITE-ProRule" id="PRU00526"/>
    </source>
</evidence>
<evidence type="ECO:0000255" key="4">
    <source>
        <dbReference type="PROSITE-ProRule" id="PRU01207"/>
    </source>
</evidence>
<evidence type="ECO:0000305" key="5"/>
<dbReference type="EMBL" id="BC082845">
    <property type="protein sequence ID" value="AAH82845.1"/>
    <property type="molecule type" value="mRNA"/>
</dbReference>
<dbReference type="RefSeq" id="NP_001088054.1">
    <property type="nucleotide sequence ID" value="NM_001094585.1"/>
</dbReference>
<dbReference type="SMR" id="Q63ZR5"/>
<dbReference type="DNASU" id="494748"/>
<dbReference type="GeneID" id="494748"/>
<dbReference type="KEGG" id="xla:494748"/>
<dbReference type="AGR" id="Xenbase:XB-GENE-966653"/>
<dbReference type="CTD" id="494748"/>
<dbReference type="Xenbase" id="XB-GENE-966653">
    <property type="gene designation" value="rhpn2.L"/>
</dbReference>
<dbReference type="OrthoDB" id="64867at2759"/>
<dbReference type="Proteomes" id="UP000186698">
    <property type="component" value="Chromosome 4L"/>
</dbReference>
<dbReference type="Bgee" id="494748">
    <property type="expression patterns" value="Expressed in lung and 18 other cell types or tissues"/>
</dbReference>
<dbReference type="GO" id="GO:0048471">
    <property type="term" value="C:perinuclear region of cytoplasm"/>
    <property type="evidence" value="ECO:0007669"/>
    <property type="project" value="UniProtKB-SubCell"/>
</dbReference>
<dbReference type="GO" id="GO:0051497">
    <property type="term" value="P:negative regulation of stress fiber assembly"/>
    <property type="evidence" value="ECO:0000318"/>
    <property type="project" value="GO_Central"/>
</dbReference>
<dbReference type="GO" id="GO:0007165">
    <property type="term" value="P:signal transduction"/>
    <property type="evidence" value="ECO:0007669"/>
    <property type="project" value="InterPro"/>
</dbReference>
<dbReference type="CDD" id="cd09249">
    <property type="entry name" value="BRO1_Rhophilin_2"/>
    <property type="match status" value="1"/>
</dbReference>
<dbReference type="CDD" id="cd06712">
    <property type="entry name" value="PDZ_rhophilin-like"/>
    <property type="match status" value="1"/>
</dbReference>
<dbReference type="FunFam" id="1.25.40.280:FF:000003">
    <property type="entry name" value="RHPN1 isoform 1"/>
    <property type="match status" value="1"/>
</dbReference>
<dbReference type="FunFam" id="2.30.42.10:FF:000160">
    <property type="entry name" value="RHPN1 isoform 1"/>
    <property type="match status" value="1"/>
</dbReference>
<dbReference type="Gene3D" id="2.30.42.10">
    <property type="match status" value="1"/>
</dbReference>
<dbReference type="Gene3D" id="1.25.40.280">
    <property type="entry name" value="alix/aip1 like domains"/>
    <property type="match status" value="1"/>
</dbReference>
<dbReference type="Gene3D" id="1.10.287.160">
    <property type="entry name" value="HR1 repeat"/>
    <property type="match status" value="1"/>
</dbReference>
<dbReference type="InterPro" id="IPR004328">
    <property type="entry name" value="BRO1_dom"/>
</dbReference>
<dbReference type="InterPro" id="IPR038499">
    <property type="entry name" value="BRO1_sf"/>
</dbReference>
<dbReference type="InterPro" id="IPR011072">
    <property type="entry name" value="HR1_rho-bd"/>
</dbReference>
<dbReference type="InterPro" id="IPR036274">
    <property type="entry name" value="HR1_rpt_sf"/>
</dbReference>
<dbReference type="InterPro" id="IPR001478">
    <property type="entry name" value="PDZ"/>
</dbReference>
<dbReference type="InterPro" id="IPR036034">
    <property type="entry name" value="PDZ_sf"/>
</dbReference>
<dbReference type="InterPro" id="IPR047138">
    <property type="entry name" value="RHPN1_2"/>
</dbReference>
<dbReference type="InterPro" id="IPR047902">
    <property type="entry name" value="RHPN2_BRO1"/>
</dbReference>
<dbReference type="PANTHER" id="PTHR23031">
    <property type="entry name" value="RHOPHILIN"/>
    <property type="match status" value="1"/>
</dbReference>
<dbReference type="PANTHER" id="PTHR23031:SF5">
    <property type="entry name" value="RHOPHILIN-2-RELATED"/>
    <property type="match status" value="1"/>
</dbReference>
<dbReference type="Pfam" id="PF03097">
    <property type="entry name" value="BRO1"/>
    <property type="match status" value="1"/>
</dbReference>
<dbReference type="Pfam" id="PF02185">
    <property type="entry name" value="HR1"/>
    <property type="match status" value="1"/>
</dbReference>
<dbReference type="Pfam" id="PF00595">
    <property type="entry name" value="PDZ"/>
    <property type="match status" value="1"/>
</dbReference>
<dbReference type="SMART" id="SM01041">
    <property type="entry name" value="BRO1"/>
    <property type="match status" value="1"/>
</dbReference>
<dbReference type="SMART" id="SM00742">
    <property type="entry name" value="Hr1"/>
    <property type="match status" value="1"/>
</dbReference>
<dbReference type="SMART" id="SM00228">
    <property type="entry name" value="PDZ"/>
    <property type="match status" value="1"/>
</dbReference>
<dbReference type="SUPFAM" id="SSF46585">
    <property type="entry name" value="HR1 repeat"/>
    <property type="match status" value="1"/>
</dbReference>
<dbReference type="SUPFAM" id="SSF50156">
    <property type="entry name" value="PDZ domain-like"/>
    <property type="match status" value="1"/>
</dbReference>
<dbReference type="PROSITE" id="PS51180">
    <property type="entry name" value="BRO1"/>
    <property type="match status" value="1"/>
</dbReference>
<dbReference type="PROSITE" id="PS50106">
    <property type="entry name" value="PDZ"/>
    <property type="match status" value="1"/>
</dbReference>
<dbReference type="PROSITE" id="PS51860">
    <property type="entry name" value="REM_1"/>
    <property type="match status" value="1"/>
</dbReference>
<protein>
    <recommendedName>
        <fullName>Rhophilin-2-B</fullName>
    </recommendedName>
    <alternativeName>
        <fullName>GTP-Rho-binding protein 2-B</fullName>
    </alternativeName>
</protein>